<dbReference type="EC" id="2.7.7.-"/>
<dbReference type="EC" id="3.1.21.-"/>
<dbReference type="EMBL" id="X84735">
    <property type="protein sequence ID" value="CAA59223.1"/>
    <property type="molecule type" value="Genomic_DNA"/>
</dbReference>
<dbReference type="SMR" id="Q88888"/>
<dbReference type="KEGG" id="vg:944407"/>
<dbReference type="OrthoDB" id="9195at10239"/>
<dbReference type="Proteomes" id="UP000007068">
    <property type="component" value="Genome"/>
</dbReference>
<dbReference type="GO" id="GO:0042025">
    <property type="term" value="C:host cell nucleus"/>
    <property type="evidence" value="ECO:0007669"/>
    <property type="project" value="UniProtKB-SubCell"/>
</dbReference>
<dbReference type="GO" id="GO:0005524">
    <property type="term" value="F:ATP binding"/>
    <property type="evidence" value="ECO:0007669"/>
    <property type="project" value="UniProtKB-KW"/>
</dbReference>
<dbReference type="GO" id="GO:0003677">
    <property type="term" value="F:DNA binding"/>
    <property type="evidence" value="ECO:0007669"/>
    <property type="project" value="UniProtKB-KW"/>
</dbReference>
<dbReference type="GO" id="GO:0016888">
    <property type="term" value="F:endodeoxyribonuclease activity, producing 5'-phosphomonoesters"/>
    <property type="evidence" value="ECO:0007669"/>
    <property type="project" value="InterPro"/>
</dbReference>
<dbReference type="GO" id="GO:0004386">
    <property type="term" value="F:helicase activity"/>
    <property type="evidence" value="ECO:0007669"/>
    <property type="project" value="UniProtKB-KW"/>
</dbReference>
<dbReference type="GO" id="GO:0046872">
    <property type="term" value="F:metal ion binding"/>
    <property type="evidence" value="ECO:0007669"/>
    <property type="project" value="UniProtKB-KW"/>
</dbReference>
<dbReference type="GO" id="GO:0016779">
    <property type="term" value="F:nucleotidyltransferase activity"/>
    <property type="evidence" value="ECO:0007669"/>
    <property type="project" value="UniProtKB-KW"/>
</dbReference>
<dbReference type="GO" id="GO:0005198">
    <property type="term" value="F:structural molecule activity"/>
    <property type="evidence" value="ECO:0007669"/>
    <property type="project" value="InterPro"/>
</dbReference>
<dbReference type="GO" id="GO:0006260">
    <property type="term" value="P:DNA replication"/>
    <property type="evidence" value="ECO:0007669"/>
    <property type="project" value="UniProtKB-KW"/>
</dbReference>
<dbReference type="FunFam" id="3.40.1310.20:FF:000001">
    <property type="entry name" value="Replication-associated protein"/>
    <property type="match status" value="1"/>
</dbReference>
<dbReference type="Gene3D" id="3.40.1310.20">
    <property type="match status" value="1"/>
</dbReference>
<dbReference type="InterPro" id="IPR049912">
    <property type="entry name" value="CRESS_DNA_REP"/>
</dbReference>
<dbReference type="InterPro" id="IPR001301">
    <property type="entry name" value="Gemini_AL1_CLV"/>
</dbReference>
<dbReference type="InterPro" id="IPR001191">
    <property type="entry name" value="Gemini_AL1_REP"/>
</dbReference>
<dbReference type="InterPro" id="IPR022692">
    <property type="entry name" value="Gemini_AL1_REP_central"/>
</dbReference>
<dbReference type="Pfam" id="PF00799">
    <property type="entry name" value="Gemini_AL1"/>
    <property type="match status" value="1"/>
</dbReference>
<dbReference type="Pfam" id="PF08283">
    <property type="entry name" value="Gemini_AL1_M"/>
    <property type="match status" value="1"/>
</dbReference>
<dbReference type="PRINTS" id="PR00227">
    <property type="entry name" value="GEMCOATAL1"/>
</dbReference>
<dbReference type="PRINTS" id="PR00228">
    <property type="entry name" value="GEMCOATCLVL1"/>
</dbReference>
<dbReference type="SUPFAM" id="SSF55464">
    <property type="entry name" value="Origin of replication-binding domain, RBD-like"/>
    <property type="match status" value="1"/>
</dbReference>
<dbReference type="PROSITE" id="PS52020">
    <property type="entry name" value="CRESS_DNA_REP"/>
    <property type="match status" value="1"/>
</dbReference>
<sequence>MPSNPKRFQIAAKNYFLTYPNCSLSKEEALDQLQRLQTPTNKKYIKVARELHENGEPHLHVLIQFEGKFNCKNQRFFDLVSPTRSTHFHPNIQGAKSSSDVNSYVDKDGDTIEWGEFQIDARSARGGQQTANDECAEALNRSSKEEALQIIKEKLPKDFLFCYHNLVSNLDRIFTPAPTPFVPPFQLSSFTNVPEDMQEWADDYFGVSAAARPMRYKSIIIEGESRTGKTMWARSLGPHNYLSGHLDFNSRVYSNSALYNVIDDVTPHYLKLKHWKELIGAQRDWQSNCKYGKPVQIKGGIPSIVLCNPGGDTSFQDFLDKEENEALKDWTLYNAVFIKLTEPLYDGTV</sequence>
<accession>Q88888</accession>
<proteinExistence type="inferred from homology"/>
<organismHost>
    <name type="scientific">Solanum lycopersicum</name>
    <name type="common">Tomato</name>
    <name type="synonym">Lycopersicon esculentum</name>
    <dbReference type="NCBI Taxonomy" id="4081"/>
</organismHost>
<organismHost>
    <name type="scientific">Solanum nigrum</name>
    <name type="common">Black nightshade</name>
    <dbReference type="NCBI Taxonomy" id="4112"/>
</organismHost>
<comment type="function">
    <text evidence="1">Essential for the replication of viral ssDNA. The closed circular ssDNA genome is first converted to a superhelical dsDNA. Rep binds a specific region at the genome origin of replication. It introduces an endonucleolytic nick within the conserved sequence 5'-TAATATTAC-3' in the intergenic region of the genome present in all geminiviruses, thereby initiating the rolling circle replication (RCR). Following cleavage, binds covalently to the 5'-phosphate of DNA as a tyrosyl ester. The cleavage gives rise to a free 3'-OH that serves as a primer for the cellular DNA polymerase. The polymerase synthesizes the (+) strand DNA by rolling circle mechanism. After one round of replication, a Rep-catalyzed nucleotidyl transfer reaction releases a circular single-stranded virus genome, thereby terminating the replication. Displays origin-specific DNA cleavage, nucleotidyl transferase, ATPase and helicase activities (By similarity).</text>
</comment>
<comment type="cofactor">
    <cofactor evidence="3">
        <name>Mg(2+)</name>
        <dbReference type="ChEBI" id="CHEBI:18420"/>
    </cofactor>
    <cofactor evidence="3">
        <name>Mn(2+)</name>
        <dbReference type="ChEBI" id="CHEBI:29035"/>
    </cofactor>
    <text evidence="3">Divalent metal cations, possibly Mg(2+) or Mn(2+).</text>
</comment>
<comment type="subunit">
    <text evidence="1">Homooligomer. Interacts with the replication enhancer protein (REn). Interacts with host retinoblastoma-related protein 1 (RBR1), and may thereby induce the transcription of host replicative enzymes even if the cell is not dividing anymore. Interacts with host PCNA. Interacts with host SCE1 protein (By similarity).</text>
</comment>
<comment type="subcellular location">
    <subcellularLocation>
        <location evidence="1">Host nucleus</location>
    </subcellularLocation>
</comment>
<comment type="domain">
    <text evidence="1">There are 3 rolling circle replication (RCR) motifs. RCR-2 is probably involved in metal coordination. RCR-3 is required for phosphodiester bond cleavage for initiation of RCR (By similarity).</text>
</comment>
<comment type="similarity">
    <text evidence="4">Belongs to the geminiviridae Rep protein family.</text>
</comment>
<name>REP_TPCTV</name>
<keyword id="KW-0067">ATP-binding</keyword>
<keyword id="KW-0190">Covalent protein-DNA linkage</keyword>
<keyword id="KW-0235">DNA replication</keyword>
<keyword id="KW-0238">DNA-binding</keyword>
<keyword id="KW-0255">Endonuclease</keyword>
<keyword id="KW-0347">Helicase</keyword>
<keyword id="KW-1048">Host nucleus</keyword>
<keyword id="KW-0945">Host-virus interaction</keyword>
<keyword id="KW-0378">Hydrolase</keyword>
<keyword id="KW-0479">Metal-binding</keyword>
<keyword id="KW-0511">Multifunctional enzyme</keyword>
<keyword id="KW-0540">Nuclease</keyword>
<keyword id="KW-0547">Nucleotide-binding</keyword>
<keyword id="KW-0548">Nucleotidyltransferase</keyword>
<keyword id="KW-1185">Reference proteome</keyword>
<keyword id="KW-0808">Transferase</keyword>
<organism>
    <name type="scientific">Tomato pseudo-curly top virus</name>
    <name type="common">TPCTV</name>
    <dbReference type="NCBI Taxonomy" id="49267"/>
    <lineage>
        <taxon>Viruses</taxon>
        <taxon>Monodnaviria</taxon>
        <taxon>Shotokuvirae</taxon>
        <taxon>Cressdnaviricota</taxon>
        <taxon>Repensiviricetes</taxon>
        <taxon>Geplafuvirales</taxon>
        <taxon>Geminiviridae</taxon>
        <taxon>Topocuvirus</taxon>
    </lineage>
</organism>
<evidence type="ECO:0000250" key="1"/>
<evidence type="ECO:0000255" key="2"/>
<evidence type="ECO:0000255" key="3">
    <source>
        <dbReference type="PROSITE-ProRule" id="PRU01364"/>
    </source>
</evidence>
<evidence type="ECO:0000305" key="4"/>
<feature type="chain" id="PRO_0000323704" description="Replication-associated protein">
    <location>
        <begin position="1"/>
        <end position="349"/>
    </location>
</feature>
<feature type="domain" description="CRESS-DNA virus Rep endonuclease" evidence="3">
    <location>
        <begin position="9"/>
        <end position="117"/>
    </location>
</feature>
<feature type="region of interest" description="Binding to RBR1" evidence="1">
    <location>
        <begin position="144"/>
        <end position="154"/>
    </location>
</feature>
<feature type="region of interest" description="Oligomerization" evidence="1">
    <location>
        <begin position="157"/>
        <end position="177"/>
    </location>
</feature>
<feature type="short sequence motif" description="RCR-1" evidence="3">
    <location>
        <begin position="16"/>
        <end position="19"/>
    </location>
</feature>
<feature type="short sequence motif" description="RCR-2" evidence="3">
    <location>
        <begin position="58"/>
        <end position="60"/>
    </location>
</feature>
<feature type="short sequence motif" description="RCR-3" evidence="3">
    <location>
        <begin position="104"/>
        <end position="107"/>
    </location>
</feature>
<feature type="active site" description="For DNA cleavage activity" evidence="3">
    <location>
        <position position="104"/>
    </location>
</feature>
<feature type="binding site" evidence="3">
    <location>
        <position position="50"/>
    </location>
    <ligand>
        <name>a divalent metal cation</name>
        <dbReference type="ChEBI" id="CHEBI:60240"/>
    </ligand>
</feature>
<feature type="binding site" evidence="3">
    <location>
        <position position="58"/>
    </location>
    <ligand>
        <name>a divalent metal cation</name>
        <dbReference type="ChEBI" id="CHEBI:60240"/>
    </ligand>
</feature>
<feature type="binding site" evidence="3">
    <location>
        <position position="60"/>
    </location>
    <ligand>
        <name>a divalent metal cation</name>
        <dbReference type="ChEBI" id="CHEBI:60240"/>
    </ligand>
</feature>
<feature type="binding site" evidence="3">
    <location>
        <position position="108"/>
    </location>
    <ligand>
        <name>a divalent metal cation</name>
        <dbReference type="ChEBI" id="CHEBI:60240"/>
    </ligand>
</feature>
<feature type="binding site" evidence="2">
    <location>
        <begin position="223"/>
        <end position="230"/>
    </location>
    <ligand>
        <name>ATP</name>
        <dbReference type="ChEBI" id="CHEBI:30616"/>
    </ligand>
</feature>
<protein>
    <recommendedName>
        <fullName>Replication-associated protein</fullName>
        <shortName>Rep</shortName>
        <ecNumber>2.7.7.-</ecNumber>
        <ecNumber>3.1.21.-</ecNumber>
    </recommendedName>
    <alternativeName>
        <fullName>Protein C1</fullName>
    </alternativeName>
</protein>
<gene>
    <name type="ORF">C1</name>
</gene>
<reference key="1">
    <citation type="journal article" date="1996" name="Virology">
        <title>Analysis of the nucleotide sequence of the treehopper-transmitted geminivirus, tomato pseudo-curly top virus, suggests a recombinant origin.</title>
        <authorList>
            <person name="Briddon R.W."/>
            <person name="Bedford I.D."/>
            <person name="Tsai J.H."/>
            <person name="Markham P.G."/>
        </authorList>
    </citation>
    <scope>NUCLEOTIDE SEQUENCE [GENOMIC DNA]</scope>
</reference>